<proteinExistence type="inferred from homology"/>
<protein>
    <recommendedName>
        <fullName>HPr kinase/phosphorylase 1</fullName>
        <shortName>HPrK/P 1</shortName>
        <ecNumber>2.7.11.-</ecNumber>
        <ecNumber>2.7.4.-</ecNumber>
    </recommendedName>
    <alternativeName>
        <fullName>HPr(Ser) kinase/phosphorylase 1</fullName>
    </alternativeName>
</protein>
<keyword id="KW-0067">ATP-binding</keyword>
<keyword id="KW-0119">Carbohydrate metabolism</keyword>
<keyword id="KW-0418">Kinase</keyword>
<keyword id="KW-0460">Magnesium</keyword>
<keyword id="KW-0479">Metal-binding</keyword>
<keyword id="KW-0511">Multifunctional enzyme</keyword>
<keyword id="KW-0547">Nucleotide-binding</keyword>
<keyword id="KW-1185">Reference proteome</keyword>
<keyword id="KW-0723">Serine/threonine-protein kinase</keyword>
<keyword id="KW-0808">Transferase</keyword>
<accession>Q8ENK1</accession>
<name>HPRK1_OCEIH</name>
<organism>
    <name type="scientific">Oceanobacillus iheyensis (strain DSM 14371 / CIP 107618 / JCM 11309 / KCTC 3954 / HTE831)</name>
    <dbReference type="NCBI Taxonomy" id="221109"/>
    <lineage>
        <taxon>Bacteria</taxon>
        <taxon>Bacillati</taxon>
        <taxon>Bacillota</taxon>
        <taxon>Bacilli</taxon>
        <taxon>Bacillales</taxon>
        <taxon>Bacillaceae</taxon>
        <taxon>Oceanobacillus</taxon>
    </lineage>
</organism>
<comment type="function">
    <text evidence="1">Catalyzes the ATP- as well as the pyrophosphate-dependent phosphorylation of a specific serine residue in HPr, a phosphocarrier protein of the phosphoenolpyruvate-dependent sugar phosphotransferase system (PTS). HprK/P also catalyzes the pyrophosphate-producing, inorganic phosphate-dependent dephosphorylation (phosphorolysis) of seryl-phosphorylated HPr (P-Ser-HPr). The two antagonistic activities of HprK/P are regulated by several intracellular metabolites, which change their concentration in response to the absence or presence of rapidly metabolisable carbon sources (glucose, fructose, etc.) in the growth medium. Also phosphorylates/dephosphorylates the HPr-like catabolite repression protein crh on a specific serine residue. Therefore, by controlling the phosphorylation state of HPr and crh, HPrK/P is a sensor enzyme that plays a major role in the regulation of carbon metabolism and sugar transport: it mediates carbon catabolite repression (CCR), and regulates PTS-catalyzed carbohydrate uptake and inducer exclusion (By similarity).</text>
</comment>
<comment type="catalytic activity">
    <reaction>
        <text>[HPr protein]-L-serine + ATP = [HPr protein]-O-phospho-L-serine + ADP + H(+)</text>
        <dbReference type="Rhea" id="RHEA:46600"/>
        <dbReference type="Rhea" id="RHEA-COMP:11602"/>
        <dbReference type="Rhea" id="RHEA-COMP:11603"/>
        <dbReference type="ChEBI" id="CHEBI:15378"/>
        <dbReference type="ChEBI" id="CHEBI:29999"/>
        <dbReference type="ChEBI" id="CHEBI:30616"/>
        <dbReference type="ChEBI" id="CHEBI:83421"/>
        <dbReference type="ChEBI" id="CHEBI:456216"/>
    </reaction>
</comment>
<comment type="catalytic activity">
    <reaction>
        <text>[HPr protein]-O-phospho-L-serine + phosphate + H(+) = [HPr protein]-L-serine + diphosphate</text>
        <dbReference type="Rhea" id="RHEA:46604"/>
        <dbReference type="Rhea" id="RHEA-COMP:11602"/>
        <dbReference type="Rhea" id="RHEA-COMP:11603"/>
        <dbReference type="ChEBI" id="CHEBI:15378"/>
        <dbReference type="ChEBI" id="CHEBI:29999"/>
        <dbReference type="ChEBI" id="CHEBI:33019"/>
        <dbReference type="ChEBI" id="CHEBI:43474"/>
        <dbReference type="ChEBI" id="CHEBI:83421"/>
    </reaction>
</comment>
<comment type="cofactor">
    <cofactor evidence="1">
        <name>Mg(2+)</name>
        <dbReference type="ChEBI" id="CHEBI:18420"/>
    </cofactor>
</comment>
<comment type="subunit">
    <text evidence="1">Homohexamer.</text>
</comment>
<comment type="domain">
    <text evidence="1">The Walker A ATP-binding motif also binds Pi and PPi.</text>
</comment>
<comment type="miscellaneous">
    <text evidence="1">Both phosphorylation and phosphorolysis are carried out by the same active site and suggest a common mechanism for both reactions.</text>
</comment>
<comment type="similarity">
    <text evidence="3">Belongs to the HPrK/P family.</text>
</comment>
<dbReference type="EC" id="2.7.11.-"/>
<dbReference type="EC" id="2.7.4.-"/>
<dbReference type="EMBL" id="BA000028">
    <property type="protein sequence ID" value="BAC14438.1"/>
    <property type="molecule type" value="Genomic_DNA"/>
</dbReference>
<dbReference type="RefSeq" id="WP_011066875.1">
    <property type="nucleotide sequence ID" value="NC_004193.1"/>
</dbReference>
<dbReference type="SMR" id="Q8ENK1"/>
<dbReference type="STRING" id="221109.gene:10734734"/>
<dbReference type="KEGG" id="oih:OB2482"/>
<dbReference type="eggNOG" id="COG1493">
    <property type="taxonomic scope" value="Bacteria"/>
</dbReference>
<dbReference type="HOGENOM" id="CLU_052030_0_1_9"/>
<dbReference type="OrthoDB" id="9778803at2"/>
<dbReference type="PhylomeDB" id="Q8ENK1"/>
<dbReference type="Proteomes" id="UP000000822">
    <property type="component" value="Chromosome"/>
</dbReference>
<dbReference type="GO" id="GO:0005524">
    <property type="term" value="F:ATP binding"/>
    <property type="evidence" value="ECO:0007669"/>
    <property type="project" value="UniProtKB-UniRule"/>
</dbReference>
<dbReference type="GO" id="GO:0000287">
    <property type="term" value="F:magnesium ion binding"/>
    <property type="evidence" value="ECO:0007669"/>
    <property type="project" value="UniProtKB-UniRule"/>
</dbReference>
<dbReference type="GO" id="GO:0000155">
    <property type="term" value="F:phosphorelay sensor kinase activity"/>
    <property type="evidence" value="ECO:0007669"/>
    <property type="project" value="InterPro"/>
</dbReference>
<dbReference type="GO" id="GO:0004674">
    <property type="term" value="F:protein serine/threonine kinase activity"/>
    <property type="evidence" value="ECO:0007669"/>
    <property type="project" value="UniProtKB-KW"/>
</dbReference>
<dbReference type="GO" id="GO:0004712">
    <property type="term" value="F:protein serine/threonine/tyrosine kinase activity"/>
    <property type="evidence" value="ECO:0007669"/>
    <property type="project" value="UniProtKB-UniRule"/>
</dbReference>
<dbReference type="GO" id="GO:0006109">
    <property type="term" value="P:regulation of carbohydrate metabolic process"/>
    <property type="evidence" value="ECO:0007669"/>
    <property type="project" value="UniProtKB-UniRule"/>
</dbReference>
<dbReference type="CDD" id="cd01918">
    <property type="entry name" value="HprK_C"/>
    <property type="match status" value="1"/>
</dbReference>
<dbReference type="FunFam" id="3.40.1390.20:FF:000002">
    <property type="entry name" value="HPr kinase/phosphorylase"/>
    <property type="match status" value="1"/>
</dbReference>
<dbReference type="FunFam" id="3.40.50.300:FF:000174">
    <property type="entry name" value="HPr kinase/phosphorylase"/>
    <property type="match status" value="1"/>
</dbReference>
<dbReference type="Gene3D" id="3.40.1390.20">
    <property type="entry name" value="HprK N-terminal domain-like"/>
    <property type="match status" value="1"/>
</dbReference>
<dbReference type="Gene3D" id="3.40.50.300">
    <property type="entry name" value="P-loop containing nucleotide triphosphate hydrolases"/>
    <property type="match status" value="1"/>
</dbReference>
<dbReference type="HAMAP" id="MF_01249">
    <property type="entry name" value="HPr_kinase"/>
    <property type="match status" value="1"/>
</dbReference>
<dbReference type="InterPro" id="IPR003755">
    <property type="entry name" value="HPr(Ser)_kin/Pase"/>
</dbReference>
<dbReference type="InterPro" id="IPR011104">
    <property type="entry name" value="Hpr_kin/Pase_C"/>
</dbReference>
<dbReference type="InterPro" id="IPR011126">
    <property type="entry name" value="Hpr_kin/Pase_Hpr_N"/>
</dbReference>
<dbReference type="InterPro" id="IPR027417">
    <property type="entry name" value="P-loop_NTPase"/>
</dbReference>
<dbReference type="InterPro" id="IPR028979">
    <property type="entry name" value="Ser_kin/Pase_Hpr-like_N_sf"/>
</dbReference>
<dbReference type="NCBIfam" id="TIGR00679">
    <property type="entry name" value="hpr-ser"/>
    <property type="match status" value="1"/>
</dbReference>
<dbReference type="PANTHER" id="PTHR30305:SF1">
    <property type="entry name" value="HPR KINASE_PHOSPHORYLASE"/>
    <property type="match status" value="1"/>
</dbReference>
<dbReference type="PANTHER" id="PTHR30305">
    <property type="entry name" value="PROTEIN YJDM-RELATED"/>
    <property type="match status" value="1"/>
</dbReference>
<dbReference type="Pfam" id="PF07475">
    <property type="entry name" value="Hpr_kinase_C"/>
    <property type="match status" value="1"/>
</dbReference>
<dbReference type="Pfam" id="PF02603">
    <property type="entry name" value="Hpr_kinase_N"/>
    <property type="match status" value="1"/>
</dbReference>
<dbReference type="SUPFAM" id="SSF75138">
    <property type="entry name" value="HprK N-terminal domain-like"/>
    <property type="match status" value="1"/>
</dbReference>
<dbReference type="SUPFAM" id="SSF53795">
    <property type="entry name" value="PEP carboxykinase-like"/>
    <property type="match status" value="1"/>
</dbReference>
<evidence type="ECO:0000250" key="1"/>
<evidence type="ECO:0000255" key="2"/>
<evidence type="ECO:0000305" key="3"/>
<sequence>MVAVVRTQDLLDNFNLTLVSGEDGIQREIITSDISRPGIEMTGYFRYYPKERLQLIGKTEMAYFLDLSSEQRRDRAERLCTDITPGIVVSRGMDIPEELKEASEKSGVPILQSPRKTTRVISRLTNYLESKFAPFTAIHGVLVDIYGVGVLIIGQSGVGKSETALELVKRGHRLVADDNVEIRQEDYDSLIGNAPPLIEHLLEIRGLGIINVMTLFGAGSVRSKKRISLVINLENWDEKKQYDRLGLDEDMMKVMDVHLPKATVPVRPGRNLAVIIEVAAMNFRLKRMGVNTAEEFSERLSTMIEKGELE</sequence>
<reference key="1">
    <citation type="journal article" date="2002" name="Nucleic Acids Res.">
        <title>Genome sequence of Oceanobacillus iheyensis isolated from the Iheya Ridge and its unexpected adaptive capabilities to extreme environments.</title>
        <authorList>
            <person name="Takami H."/>
            <person name="Takaki Y."/>
            <person name="Uchiyama I."/>
        </authorList>
    </citation>
    <scope>NUCLEOTIDE SEQUENCE [LARGE SCALE GENOMIC DNA]</scope>
    <source>
        <strain>DSM 14371 / CIP 107618 / JCM 11309 / KCTC 3954 / HTE831</strain>
    </source>
</reference>
<feature type="chain" id="PRO_0000058978" description="HPr kinase/phosphorylase 1">
    <location>
        <begin position="1"/>
        <end position="310"/>
    </location>
</feature>
<feature type="region of interest" description="Important for the catalytic mechanism of both phosphorylation and dephosphorylation" evidence="1">
    <location>
        <begin position="202"/>
        <end position="211"/>
    </location>
</feature>
<feature type="region of interest" description="Important for the catalytic mechanism of dephosphorylation" evidence="1">
    <location>
        <begin position="265"/>
        <end position="270"/>
    </location>
</feature>
<feature type="active site" evidence="1">
    <location>
        <position position="139"/>
    </location>
</feature>
<feature type="active site" evidence="1">
    <location>
        <position position="160"/>
    </location>
</feature>
<feature type="active site" description="Proton acceptor; for phosphorylation activity. Proton donor; for dephosphorylation activity" evidence="1">
    <location>
        <position position="178"/>
    </location>
</feature>
<feature type="active site" evidence="1">
    <location>
        <position position="244"/>
    </location>
</feature>
<feature type="binding site" evidence="1">
    <location>
        <begin position="154"/>
        <end position="161"/>
    </location>
    <ligand>
        <name>ATP</name>
        <dbReference type="ChEBI" id="CHEBI:30616"/>
    </ligand>
</feature>
<feature type="binding site" evidence="2">
    <location>
        <position position="161"/>
    </location>
    <ligand>
        <name>Mg(2+)</name>
        <dbReference type="ChEBI" id="CHEBI:18420"/>
    </ligand>
</feature>
<feature type="binding site" evidence="2">
    <location>
        <position position="203"/>
    </location>
    <ligand>
        <name>Mg(2+)</name>
        <dbReference type="ChEBI" id="CHEBI:18420"/>
    </ligand>
</feature>
<gene>
    <name type="primary">hprK1</name>
    <name type="ordered locus">OB2482</name>
</gene>